<protein>
    <recommendedName>
        <fullName evidence="1">Large ribosomal subunit protein bL12</fullName>
    </recommendedName>
    <alternativeName>
        <fullName evidence="2">50S ribosomal protein L7/L12</fullName>
    </alternativeName>
</protein>
<proteinExistence type="inferred from homology"/>
<name>RL7_CERS4</name>
<organism>
    <name type="scientific">Cereibacter sphaeroides (strain ATCC 17023 / DSM 158 / JCM 6121 / CCUG 31486 / LMG 2827 / NBRC 12203 / NCIMB 8253 / ATH 2.4.1.)</name>
    <name type="common">Rhodobacter sphaeroides</name>
    <dbReference type="NCBI Taxonomy" id="272943"/>
    <lineage>
        <taxon>Bacteria</taxon>
        <taxon>Pseudomonadati</taxon>
        <taxon>Pseudomonadota</taxon>
        <taxon>Alphaproteobacteria</taxon>
        <taxon>Rhodobacterales</taxon>
        <taxon>Paracoccaceae</taxon>
        <taxon>Cereibacter</taxon>
    </lineage>
</organism>
<reference key="1">
    <citation type="submission" date="2005-09" db="EMBL/GenBank/DDBJ databases">
        <title>Complete sequence of chromosome 1 of Rhodobacter sphaeroides 2.4.1.</title>
        <authorList>
            <person name="Copeland A."/>
            <person name="Lucas S."/>
            <person name="Lapidus A."/>
            <person name="Barry K."/>
            <person name="Detter J.C."/>
            <person name="Glavina T."/>
            <person name="Hammon N."/>
            <person name="Israni S."/>
            <person name="Pitluck S."/>
            <person name="Richardson P."/>
            <person name="Mackenzie C."/>
            <person name="Choudhary M."/>
            <person name="Larimer F."/>
            <person name="Hauser L.J."/>
            <person name="Land M."/>
            <person name="Donohue T.J."/>
            <person name="Kaplan S."/>
        </authorList>
    </citation>
    <scope>NUCLEOTIDE SEQUENCE [LARGE SCALE GENOMIC DNA]</scope>
    <source>
        <strain>ATCC 17023 / DSM 158 / JCM 6121 / CCUG 31486 / LMG 2827 / NBRC 12203 / NCIMB 8253 / ATH 2.4.1.</strain>
    </source>
</reference>
<keyword id="KW-1185">Reference proteome</keyword>
<keyword id="KW-0687">Ribonucleoprotein</keyword>
<keyword id="KW-0689">Ribosomal protein</keyword>
<gene>
    <name evidence="1" type="primary">rplL</name>
    <name type="ordered locus">RHOS4_02850</name>
    <name type="ORF">RSP_1700</name>
</gene>
<accession>Q3J5T1</accession>
<dbReference type="EMBL" id="CP000143">
    <property type="protein sequence ID" value="ABA77853.1"/>
    <property type="molecule type" value="Genomic_DNA"/>
</dbReference>
<dbReference type="RefSeq" id="WP_002722477.1">
    <property type="nucleotide sequence ID" value="NZ_CP030271.1"/>
</dbReference>
<dbReference type="RefSeq" id="YP_351754.1">
    <property type="nucleotide sequence ID" value="NC_007493.2"/>
</dbReference>
<dbReference type="SMR" id="Q3J5T1"/>
<dbReference type="STRING" id="272943.RSP_1700"/>
<dbReference type="EnsemblBacteria" id="ABA77853">
    <property type="protein sequence ID" value="ABA77853"/>
    <property type="gene ID" value="RSP_1700"/>
</dbReference>
<dbReference type="GeneID" id="67445491"/>
<dbReference type="KEGG" id="rsp:RSP_1700"/>
<dbReference type="PATRIC" id="fig|272943.9.peg.583"/>
<dbReference type="eggNOG" id="COG0222">
    <property type="taxonomic scope" value="Bacteria"/>
</dbReference>
<dbReference type="OrthoDB" id="9811748at2"/>
<dbReference type="PhylomeDB" id="Q3J5T1"/>
<dbReference type="Proteomes" id="UP000002703">
    <property type="component" value="Chromosome 1"/>
</dbReference>
<dbReference type="GO" id="GO:0022625">
    <property type="term" value="C:cytosolic large ribosomal subunit"/>
    <property type="evidence" value="ECO:0007669"/>
    <property type="project" value="TreeGrafter"/>
</dbReference>
<dbReference type="GO" id="GO:0003729">
    <property type="term" value="F:mRNA binding"/>
    <property type="evidence" value="ECO:0007669"/>
    <property type="project" value="TreeGrafter"/>
</dbReference>
<dbReference type="GO" id="GO:0003735">
    <property type="term" value="F:structural constituent of ribosome"/>
    <property type="evidence" value="ECO:0007669"/>
    <property type="project" value="InterPro"/>
</dbReference>
<dbReference type="GO" id="GO:0006412">
    <property type="term" value="P:translation"/>
    <property type="evidence" value="ECO:0007669"/>
    <property type="project" value="UniProtKB-UniRule"/>
</dbReference>
<dbReference type="CDD" id="cd00387">
    <property type="entry name" value="Ribosomal_L7_L12"/>
    <property type="match status" value="1"/>
</dbReference>
<dbReference type="FunFam" id="3.30.1390.10:FF:000001">
    <property type="entry name" value="50S ribosomal protein L7/L12"/>
    <property type="match status" value="1"/>
</dbReference>
<dbReference type="Gene3D" id="3.30.1390.10">
    <property type="match status" value="1"/>
</dbReference>
<dbReference type="Gene3D" id="1.20.5.710">
    <property type="entry name" value="Single helix bin"/>
    <property type="match status" value="1"/>
</dbReference>
<dbReference type="HAMAP" id="MF_00368">
    <property type="entry name" value="Ribosomal_bL12"/>
    <property type="match status" value="1"/>
</dbReference>
<dbReference type="InterPro" id="IPR000206">
    <property type="entry name" value="Ribosomal_bL12"/>
</dbReference>
<dbReference type="InterPro" id="IPR013823">
    <property type="entry name" value="Ribosomal_bL12_C"/>
</dbReference>
<dbReference type="InterPro" id="IPR014719">
    <property type="entry name" value="Ribosomal_bL12_C/ClpS-like"/>
</dbReference>
<dbReference type="InterPro" id="IPR008932">
    <property type="entry name" value="Ribosomal_bL12_oligo"/>
</dbReference>
<dbReference type="InterPro" id="IPR036235">
    <property type="entry name" value="Ribosomal_bL12_oligo_N_sf"/>
</dbReference>
<dbReference type="NCBIfam" id="TIGR00855">
    <property type="entry name" value="L12"/>
    <property type="match status" value="1"/>
</dbReference>
<dbReference type="PANTHER" id="PTHR45987">
    <property type="entry name" value="39S RIBOSOMAL PROTEIN L12"/>
    <property type="match status" value="1"/>
</dbReference>
<dbReference type="PANTHER" id="PTHR45987:SF4">
    <property type="entry name" value="LARGE RIBOSOMAL SUBUNIT PROTEIN BL12M"/>
    <property type="match status" value="1"/>
</dbReference>
<dbReference type="Pfam" id="PF00542">
    <property type="entry name" value="Ribosomal_L12"/>
    <property type="match status" value="1"/>
</dbReference>
<dbReference type="Pfam" id="PF16320">
    <property type="entry name" value="Ribosomal_L12_N"/>
    <property type="match status" value="1"/>
</dbReference>
<dbReference type="SUPFAM" id="SSF54736">
    <property type="entry name" value="ClpS-like"/>
    <property type="match status" value="1"/>
</dbReference>
<dbReference type="SUPFAM" id="SSF48300">
    <property type="entry name" value="Ribosomal protein L7/12, oligomerisation (N-terminal) domain"/>
    <property type="match status" value="1"/>
</dbReference>
<evidence type="ECO:0000255" key="1">
    <source>
        <dbReference type="HAMAP-Rule" id="MF_00368"/>
    </source>
</evidence>
<evidence type="ECO:0000305" key="2"/>
<sequence>MADLNKLAEDIVGLTLLEAQELKTILKDKYGIEPAAGGAVMMAGPAAGAAAPAEEEKTEFDVVLTDAGANKINVIKEVRAITGLGLKEAKDLVEAGGKVKEAVAKADAEAMKKKLEEAGAKVELK</sequence>
<feature type="chain" id="PRO_0000243480" description="Large ribosomal subunit protein bL12">
    <location>
        <begin position="1"/>
        <end position="125"/>
    </location>
</feature>
<comment type="function">
    <text evidence="1">Forms part of the ribosomal stalk which helps the ribosome interact with GTP-bound translation factors. Is thus essential for accurate translation.</text>
</comment>
<comment type="subunit">
    <text evidence="1">Homodimer. Part of the ribosomal stalk of the 50S ribosomal subunit. Forms a multimeric L10(L12)X complex, where L10 forms an elongated spine to which 2 to 4 L12 dimers bind in a sequential fashion. Binds GTP-bound translation factors.</text>
</comment>
<comment type="similarity">
    <text evidence="1">Belongs to the bacterial ribosomal protein bL12 family.</text>
</comment>